<evidence type="ECO:0000250" key="1">
    <source>
        <dbReference type="UniProtKB" id="Q01253"/>
    </source>
</evidence>
<evidence type="ECO:0000269" key="2">
    <source>
    </source>
</evidence>
<evidence type="ECO:0000269" key="3">
    <source>
    </source>
</evidence>
<evidence type="ECO:0000303" key="4">
    <source>
    </source>
</evidence>
<evidence type="ECO:0000303" key="5">
    <source>
    </source>
</evidence>
<evidence type="ECO:0000305" key="6"/>
<protein>
    <recommendedName>
        <fullName evidence="6">SPI-2 type 3 secretion system stator protein</fullName>
        <shortName evidence="6">T3SS-2 stator protein</shortName>
    </recommendedName>
    <alternativeName>
        <fullName>Secretion system apparatus protein SsaK</fullName>
    </alternativeName>
</protein>
<comment type="function">
    <text evidence="1 2">Component of the type III secretion system (T3SS), also called injectisome, which is used to inject bacterial effector proteins into eukaryotic host cells (PubMed:24722491). Acts as a regulator of the SsaN/SctN2 ATPase activity (By similarity).</text>
</comment>
<comment type="subunit">
    <text evidence="2 3">The core secretion machinery of the T3SS is composed of approximately 20 different proteins, including cytoplasmic components, a base, an export apparatus and a needle (PubMed:30107569). This subunit is part of the cytosolic complex (PubMed:24722491). Interacts directly with SsaN/SctN2 (T3SS-2 ATPase) (PubMed:24722491).</text>
</comment>
<comment type="subcellular location">
    <subcellularLocation>
        <location evidence="2">Cytoplasm</location>
    </subcellularLocation>
    <text evidence="2">Detected in both the soluble and membrane fractions.</text>
</comment>
<comment type="similarity">
    <text evidence="6">Belongs to the SctL stator family.</text>
</comment>
<comment type="sequence caution" evidence="6">
    <conflict type="erroneous initiation">
        <sequence resource="EMBL-CDS" id="CAA70533"/>
    </conflict>
</comment>
<accession>P74853</accession>
<gene>
    <name evidence="5" type="primary">sctL2</name>
    <name evidence="4" type="synonym">ssaK</name>
    <name type="ordered locus">STM1411</name>
</gene>
<name>SCTL2_SALTY</name>
<sequence length="224" mass="26293">MSFTSLPLTEINHKLPARNIIESQWITLQLTLFAQEQQAKRVSHAIVSSAYRKAEKIIRDAYRYQREQKVEQQQELACLRKNTLEKMEVEWLEQHVKHLQDDENQFRSLVDHAAHHIKNSIEQVLLAWFDQQSVDSVMCHRLARQATAMAEEGALYLRIHPEKEALMRETFGKRFTLIIEPGFSPDQAELSSTRYAVEFSLSRHFNALLKWLRNGEDKRGSDEY</sequence>
<dbReference type="EMBL" id="Y09357">
    <property type="protein sequence ID" value="CAA70533.1"/>
    <property type="status" value="ALT_INIT"/>
    <property type="molecule type" value="Genomic_DNA"/>
</dbReference>
<dbReference type="EMBL" id="AE006468">
    <property type="protein sequence ID" value="AAL20335.1"/>
    <property type="molecule type" value="Genomic_DNA"/>
</dbReference>
<dbReference type="RefSeq" id="NP_460376.1">
    <property type="nucleotide sequence ID" value="NC_003197.2"/>
</dbReference>
<dbReference type="RefSeq" id="WP_000011201.1">
    <property type="nucleotide sequence ID" value="NC_003197.2"/>
</dbReference>
<dbReference type="SMR" id="P74853"/>
<dbReference type="IntAct" id="P74853">
    <property type="interactions" value="1"/>
</dbReference>
<dbReference type="STRING" id="99287.STM1411"/>
<dbReference type="PaxDb" id="99287-STM1411"/>
<dbReference type="DNASU" id="1252929"/>
<dbReference type="GeneID" id="1252929"/>
<dbReference type="KEGG" id="stm:STM1411"/>
<dbReference type="PATRIC" id="fig|99287.12.peg.1495"/>
<dbReference type="HOGENOM" id="CLU_093765_0_0_6"/>
<dbReference type="OMA" id="LAQHVHW"/>
<dbReference type="BioCyc" id="SENT99287:STM1411-MONOMER"/>
<dbReference type="PHI-base" id="PHI:5022"/>
<dbReference type="PHI-base" id="PHI:621"/>
<dbReference type="Proteomes" id="UP000001014">
    <property type="component" value="Chromosome"/>
</dbReference>
<dbReference type="GO" id="GO:0005737">
    <property type="term" value="C:cytoplasm"/>
    <property type="evidence" value="ECO:0007669"/>
    <property type="project" value="UniProtKB-SubCell"/>
</dbReference>
<dbReference type="GO" id="GO:0030430">
    <property type="term" value="C:host cell cytoplasm"/>
    <property type="evidence" value="ECO:0000315"/>
    <property type="project" value="AgBase"/>
</dbReference>
<dbReference type="GO" id="GO:0033644">
    <property type="term" value="C:host cell membrane"/>
    <property type="evidence" value="ECO:0000315"/>
    <property type="project" value="AgBase"/>
</dbReference>
<dbReference type="GO" id="GO:0030254">
    <property type="term" value="P:protein secretion by the type III secretion system"/>
    <property type="evidence" value="ECO:0007669"/>
    <property type="project" value="InterPro"/>
</dbReference>
<dbReference type="InterPro" id="IPR012842">
    <property type="entry name" value="T3SS_SctL/SctL2"/>
</dbReference>
<dbReference type="NCBIfam" id="TIGR02499">
    <property type="entry name" value="HrpE_YscL_not"/>
    <property type="match status" value="1"/>
</dbReference>
<dbReference type="NCBIfam" id="NF011881">
    <property type="entry name" value="PRK15354.1"/>
    <property type="match status" value="1"/>
</dbReference>
<keyword id="KW-0963">Cytoplasm</keyword>
<keyword id="KW-0653">Protein transport</keyword>
<keyword id="KW-1185">Reference proteome</keyword>
<keyword id="KW-0813">Transport</keyword>
<keyword id="KW-0843">Virulence</keyword>
<feature type="chain" id="PRO_0000072203" description="SPI-2 type 3 secretion system stator protein">
    <location>
        <begin position="1"/>
        <end position="224"/>
    </location>
</feature>
<proteinExistence type="evidence at protein level"/>
<reference key="1">
    <citation type="journal article" date="1997" name="Mol. Microbiol.">
        <title>Functional analysis of ssaJ and the ssaK/U operon, 13 genes encoding components of the type III secretion apparatus of Salmonella pathogenicity island 2.</title>
        <authorList>
            <person name="Hensel M."/>
            <person name="Shea J.E."/>
            <person name="Raupach B."/>
            <person name="Monack D."/>
            <person name="Falkow S."/>
            <person name="Gleeson C."/>
            <person name="Kubo T."/>
            <person name="Holden D.W."/>
        </authorList>
    </citation>
    <scope>NUCLEOTIDE SEQUENCE [GENOMIC DNA]</scope>
    <source>
        <strain>LT2</strain>
    </source>
</reference>
<reference key="2">
    <citation type="journal article" date="2001" name="Nature">
        <title>Complete genome sequence of Salmonella enterica serovar Typhimurium LT2.</title>
        <authorList>
            <person name="McClelland M."/>
            <person name="Sanderson K.E."/>
            <person name="Spieth J."/>
            <person name="Clifton S.W."/>
            <person name="Latreille P."/>
            <person name="Courtney L."/>
            <person name="Porwollik S."/>
            <person name="Ali J."/>
            <person name="Dante M."/>
            <person name="Du F."/>
            <person name="Hou S."/>
            <person name="Layman D."/>
            <person name="Leonard S."/>
            <person name="Nguyen C."/>
            <person name="Scott K."/>
            <person name="Holmes A."/>
            <person name="Grewal N."/>
            <person name="Mulvaney E."/>
            <person name="Ryan E."/>
            <person name="Sun H."/>
            <person name="Florea L."/>
            <person name="Miller W."/>
            <person name="Stoneking T."/>
            <person name="Nhan M."/>
            <person name="Waterston R."/>
            <person name="Wilson R.K."/>
        </authorList>
    </citation>
    <scope>NUCLEOTIDE SEQUENCE [LARGE SCALE GENOMIC DNA]</scope>
    <source>
        <strain>LT2 / SGSC1412 / ATCC 700720</strain>
    </source>
</reference>
<reference key="3">
    <citation type="journal article" date="1998" name="Microbiol. Mol. Biol. Rev.">
        <title>Type III protein secretion systems in bacterial pathogens of animals and plants.</title>
        <authorList>
            <person name="Hueck C.J."/>
        </authorList>
    </citation>
    <scope>REVIEW</scope>
    <scope>NOMENCLATURE</scope>
</reference>
<reference key="4">
    <citation type="journal article" date="2014" name="PLoS ONE">
        <title>Functional characterization of the type III secretion ATPase SsaN encoded by Salmonella pathogenicity island 2.</title>
        <authorList>
            <person name="Yoshida Y."/>
            <person name="Miki T."/>
            <person name="Ono S."/>
            <person name="Haneda T."/>
            <person name="Ito M."/>
            <person name="Okada N."/>
        </authorList>
    </citation>
    <scope>FUNCTION</scope>
    <scope>SUBUNIT</scope>
    <scope>INTERACTION WITH SSAN/SCTN</scope>
    <scope>SUBCELLULAR LOCATION</scope>
</reference>
<reference key="5">
    <citation type="journal article" date="2018" name="FEMS Microbiol. Lett.">
        <title>Bacterial type III secretion systems: a complex device for the delivery of bacterial effector proteins into eukaryotic host cells.</title>
        <authorList>
            <person name="Wagner S."/>
            <person name="Grin I."/>
            <person name="Malmsheimer S."/>
            <person name="Singh N."/>
            <person name="Torres-Vargas C.E."/>
            <person name="Westerhausen S."/>
        </authorList>
    </citation>
    <scope>REVIEW</scope>
    <scope>SUBUNIT</scope>
</reference>
<organism>
    <name type="scientific">Salmonella typhimurium (strain LT2 / SGSC1412 / ATCC 700720)</name>
    <dbReference type="NCBI Taxonomy" id="99287"/>
    <lineage>
        <taxon>Bacteria</taxon>
        <taxon>Pseudomonadati</taxon>
        <taxon>Pseudomonadota</taxon>
        <taxon>Gammaproteobacteria</taxon>
        <taxon>Enterobacterales</taxon>
        <taxon>Enterobacteriaceae</taxon>
        <taxon>Salmonella</taxon>
    </lineage>
</organism>